<keyword id="KW-0687">Ribonucleoprotein</keyword>
<keyword id="KW-0689">Ribosomal protein</keyword>
<protein>
    <recommendedName>
        <fullName evidence="1">Large ribosomal subunit protein uL13</fullName>
    </recommendedName>
    <alternativeName>
        <fullName evidence="2">50S ribosomal protein L13</fullName>
    </alternativeName>
</protein>
<comment type="function">
    <text evidence="1">This protein is one of the early assembly proteins of the 50S ribosomal subunit, although it is not seen to bind rRNA by itself. It is important during the early stages of 50S assembly.</text>
</comment>
<comment type="subunit">
    <text evidence="1">Part of the 50S ribosomal subunit.</text>
</comment>
<comment type="similarity">
    <text evidence="1">Belongs to the universal ribosomal protein uL13 family.</text>
</comment>
<gene>
    <name evidence="1" type="primary">rplM</name>
    <name type="ordered locus">BCB4264_A0165</name>
</gene>
<sequence>MRTTFMAKANEVERKWYVVDAEGQTLGRLASEVASILRGKNKPTFTPHVDTGDHVIIINAEKIHLTGNKLNDKIYYRHTNHPGGLKQRTALEMRTNYPVQMLELAIKGMLPKGRLGRQVSKKLNVYAGAEHPHQAQKPEVYELRG</sequence>
<accession>B7HJJ0</accession>
<proteinExistence type="inferred from homology"/>
<evidence type="ECO:0000255" key="1">
    <source>
        <dbReference type="HAMAP-Rule" id="MF_01366"/>
    </source>
</evidence>
<evidence type="ECO:0000305" key="2"/>
<organism>
    <name type="scientific">Bacillus cereus (strain B4264)</name>
    <dbReference type="NCBI Taxonomy" id="405532"/>
    <lineage>
        <taxon>Bacteria</taxon>
        <taxon>Bacillati</taxon>
        <taxon>Bacillota</taxon>
        <taxon>Bacilli</taxon>
        <taxon>Bacillales</taxon>
        <taxon>Bacillaceae</taxon>
        <taxon>Bacillus</taxon>
        <taxon>Bacillus cereus group</taxon>
    </lineage>
</organism>
<dbReference type="EMBL" id="CP001176">
    <property type="protein sequence ID" value="ACK59509.1"/>
    <property type="molecule type" value="Genomic_DNA"/>
</dbReference>
<dbReference type="RefSeq" id="WP_001260793.1">
    <property type="nucleotide sequence ID" value="NZ_VEHB01000017.1"/>
</dbReference>
<dbReference type="SMR" id="B7HJJ0"/>
<dbReference type="GeneID" id="93010910"/>
<dbReference type="KEGG" id="bcb:BCB4264_A0165"/>
<dbReference type="HOGENOM" id="CLU_082184_2_2_9"/>
<dbReference type="Proteomes" id="UP000007096">
    <property type="component" value="Chromosome"/>
</dbReference>
<dbReference type="GO" id="GO:0022625">
    <property type="term" value="C:cytosolic large ribosomal subunit"/>
    <property type="evidence" value="ECO:0007669"/>
    <property type="project" value="TreeGrafter"/>
</dbReference>
<dbReference type="GO" id="GO:0003729">
    <property type="term" value="F:mRNA binding"/>
    <property type="evidence" value="ECO:0007669"/>
    <property type="project" value="TreeGrafter"/>
</dbReference>
<dbReference type="GO" id="GO:0003735">
    <property type="term" value="F:structural constituent of ribosome"/>
    <property type="evidence" value="ECO:0007669"/>
    <property type="project" value="InterPro"/>
</dbReference>
<dbReference type="GO" id="GO:0017148">
    <property type="term" value="P:negative regulation of translation"/>
    <property type="evidence" value="ECO:0007669"/>
    <property type="project" value="TreeGrafter"/>
</dbReference>
<dbReference type="GO" id="GO:0006412">
    <property type="term" value="P:translation"/>
    <property type="evidence" value="ECO:0007669"/>
    <property type="project" value="UniProtKB-UniRule"/>
</dbReference>
<dbReference type="CDD" id="cd00392">
    <property type="entry name" value="Ribosomal_L13"/>
    <property type="match status" value="1"/>
</dbReference>
<dbReference type="FunFam" id="3.90.1180.10:FF:000001">
    <property type="entry name" value="50S ribosomal protein L13"/>
    <property type="match status" value="1"/>
</dbReference>
<dbReference type="Gene3D" id="3.90.1180.10">
    <property type="entry name" value="Ribosomal protein L13"/>
    <property type="match status" value="1"/>
</dbReference>
<dbReference type="HAMAP" id="MF_01366">
    <property type="entry name" value="Ribosomal_uL13"/>
    <property type="match status" value="1"/>
</dbReference>
<dbReference type="InterPro" id="IPR005822">
    <property type="entry name" value="Ribosomal_uL13"/>
</dbReference>
<dbReference type="InterPro" id="IPR005823">
    <property type="entry name" value="Ribosomal_uL13_bac-type"/>
</dbReference>
<dbReference type="InterPro" id="IPR023563">
    <property type="entry name" value="Ribosomal_uL13_CS"/>
</dbReference>
<dbReference type="InterPro" id="IPR036899">
    <property type="entry name" value="Ribosomal_uL13_sf"/>
</dbReference>
<dbReference type="NCBIfam" id="TIGR01066">
    <property type="entry name" value="rplM_bact"/>
    <property type="match status" value="1"/>
</dbReference>
<dbReference type="PANTHER" id="PTHR11545:SF2">
    <property type="entry name" value="LARGE RIBOSOMAL SUBUNIT PROTEIN UL13M"/>
    <property type="match status" value="1"/>
</dbReference>
<dbReference type="PANTHER" id="PTHR11545">
    <property type="entry name" value="RIBOSOMAL PROTEIN L13"/>
    <property type="match status" value="1"/>
</dbReference>
<dbReference type="Pfam" id="PF00572">
    <property type="entry name" value="Ribosomal_L13"/>
    <property type="match status" value="1"/>
</dbReference>
<dbReference type="PIRSF" id="PIRSF002181">
    <property type="entry name" value="Ribosomal_L13"/>
    <property type="match status" value="1"/>
</dbReference>
<dbReference type="SUPFAM" id="SSF52161">
    <property type="entry name" value="Ribosomal protein L13"/>
    <property type="match status" value="1"/>
</dbReference>
<dbReference type="PROSITE" id="PS00783">
    <property type="entry name" value="RIBOSOMAL_L13"/>
    <property type="match status" value="1"/>
</dbReference>
<reference key="1">
    <citation type="submission" date="2008-10" db="EMBL/GenBank/DDBJ databases">
        <title>Genome sequence of Bacillus cereus B4264.</title>
        <authorList>
            <person name="Dodson R.J."/>
            <person name="Durkin A.S."/>
            <person name="Rosovitz M.J."/>
            <person name="Rasko D.A."/>
            <person name="Hoffmaster A."/>
            <person name="Ravel J."/>
            <person name="Sutton G."/>
        </authorList>
    </citation>
    <scope>NUCLEOTIDE SEQUENCE [LARGE SCALE GENOMIC DNA]</scope>
    <source>
        <strain>B4264</strain>
    </source>
</reference>
<feature type="chain" id="PRO_1000144089" description="Large ribosomal subunit protein uL13">
    <location>
        <begin position="1"/>
        <end position="145"/>
    </location>
</feature>
<name>RL13_BACC4</name>